<name>KAXU1_HOFGE</name>
<feature type="signal peptide" evidence="3">
    <location>
        <begin position="1"/>
        <end position="21"/>
    </location>
</feature>
<feature type="peptide" id="PRO_0000366117" description="Potassium channel toxin alpha-KTx">
    <location>
        <begin position="22"/>
        <end position="65"/>
    </location>
</feature>
<feature type="disulfide bond" evidence="2">
    <location>
        <begin position="29"/>
        <end position="49"/>
    </location>
</feature>
<feature type="disulfide bond" evidence="2">
    <location>
        <begin position="35"/>
        <end position="59"/>
    </location>
</feature>
<feature type="disulfide bond" evidence="2">
    <location>
        <begin position="39"/>
        <end position="61"/>
    </location>
</feature>
<feature type="disulfide bond" evidence="2">
    <location>
        <begin position="44"/>
        <end position="64"/>
    </location>
</feature>
<proteinExistence type="inferred from homology"/>
<accession>P0C8X8</accession>
<protein>
    <recommendedName>
        <fullName evidence="4">Potassium channel toxin alpha-KTx</fullName>
    </recommendedName>
</protein>
<reference key="1">
    <citation type="journal article" date="2007" name="BMC Genomics">
        <title>Transcriptome analysis of the venom gland of the Mexican scorpion Hadrurus gertschi (Arachnida: Scorpiones).</title>
        <authorList>
            <person name="Schwartz E.F."/>
            <person name="Diego-Garcia E."/>
            <person name="Rodriguez de la Vega R.C."/>
            <person name="Possani L.D."/>
        </authorList>
    </citation>
    <scope>NUCLEOTIDE SEQUENCE [LARGE SCALE MRNA]</scope>
    <source>
        <tissue>Venom gland</tissue>
    </source>
</reference>
<organism>
    <name type="scientific">Hoffmannihadrurus gertschi</name>
    <name type="common">Scorpion</name>
    <name type="synonym">Hadrurus gertschi</name>
    <dbReference type="NCBI Taxonomy" id="380989"/>
    <lineage>
        <taxon>Eukaryota</taxon>
        <taxon>Metazoa</taxon>
        <taxon>Ecdysozoa</taxon>
        <taxon>Arthropoda</taxon>
        <taxon>Chelicerata</taxon>
        <taxon>Arachnida</taxon>
        <taxon>Scorpiones</taxon>
        <taxon>Iurida</taxon>
        <taxon>Iuroidea</taxon>
        <taxon>Hadrurus</taxon>
    </lineage>
</organism>
<sequence length="66" mass="7583">MNTKVVLIMLMITSVILVVEAETLFTANCLDRKDCKKHCKSKGCKEMKCEQIIKPTWRCLCIMCSK</sequence>
<dbReference type="EMBL" id="EL698898">
    <property type="status" value="NOT_ANNOTATED_CDS"/>
    <property type="molecule type" value="mRNA"/>
</dbReference>
<dbReference type="SMR" id="P0C8X8"/>
<dbReference type="GO" id="GO:0005576">
    <property type="term" value="C:extracellular region"/>
    <property type="evidence" value="ECO:0007669"/>
    <property type="project" value="UniProtKB-SubCell"/>
</dbReference>
<dbReference type="GO" id="GO:0015459">
    <property type="term" value="F:potassium channel regulator activity"/>
    <property type="evidence" value="ECO:0007669"/>
    <property type="project" value="UniProtKB-KW"/>
</dbReference>
<dbReference type="GO" id="GO:0090729">
    <property type="term" value="F:toxin activity"/>
    <property type="evidence" value="ECO:0007669"/>
    <property type="project" value="UniProtKB-KW"/>
</dbReference>
<comment type="function">
    <text evidence="1">Blocks voltage-gated potassium channels.</text>
</comment>
<comment type="subcellular location">
    <subcellularLocation>
        <location evidence="5">Secreted</location>
    </subcellularLocation>
</comment>
<comment type="tissue specificity">
    <text evidence="5">Expressed by the venom gland.</text>
</comment>
<comment type="similarity">
    <text evidence="4">Belongs to the short scorpion toxin superfamily. Potassium channel inhibitor family.</text>
</comment>
<keyword id="KW-1015">Disulfide bond</keyword>
<keyword id="KW-0872">Ion channel impairing toxin</keyword>
<keyword id="KW-0528">Neurotoxin</keyword>
<keyword id="KW-0632">Potassium channel impairing toxin</keyword>
<keyword id="KW-0964">Secreted</keyword>
<keyword id="KW-0732">Signal</keyword>
<keyword id="KW-0800">Toxin</keyword>
<evidence type="ECO:0000250" key="1"/>
<evidence type="ECO:0000250" key="2">
    <source>
        <dbReference type="UniProtKB" id="P0DJ31"/>
    </source>
</evidence>
<evidence type="ECO:0000255" key="3"/>
<evidence type="ECO:0000305" key="4"/>
<evidence type="ECO:0000305" key="5">
    <source>
    </source>
</evidence>